<reference key="1">
    <citation type="journal article" date="2009" name="Mol. Biol. Evol.">
        <title>Molecular evolution, functional variation, and proposed nomenclature of the gene family that includes sphingomyelinase D in sicariid spider venoms.</title>
        <authorList>
            <person name="Binford G.J."/>
            <person name="Bodner M.R."/>
            <person name="Cordes M.H."/>
            <person name="Baldwin K.L."/>
            <person name="Rynerson M.R."/>
            <person name="Burns S.N."/>
            <person name="Zobel-Thropp P.A."/>
        </authorList>
    </citation>
    <scope>NUCLEOTIDE SEQUENCE [MRNA]</scope>
    <scope>NOMENCLATURE</scope>
    <source>
        <tissue>Venom gland</tissue>
    </source>
</reference>
<name>A1KB1_LOXAP</name>
<comment type="function">
    <text evidence="1 3">Dermonecrotic toxins cleave the phosphodiester linkage between the phosphate and headgroup of certain phospholipids (sphingolipid and lysolipid substrates), forming an alcohol (often choline) and a cyclic phosphate (By similarity). This toxin acts on sphingomyelin (SM) (By similarity). It may also act on ceramide phosphoethanolamine (CPE), lysophosphatidylcholine (LPC) and lysophosphatidylethanolamine (LPE), but not on lysophosphatidylserine (LPS), and lysophosphatidylglycerol (LPG) (By similarity). It acts by transphosphatidylation, releasing exclusively cyclic phosphate products as second products (By similarity). Induces dermonecrosis, hemolysis, increased vascular permeability, edema, inflammatory response, and platelet aggregation (By similarity).</text>
</comment>
<comment type="catalytic activity">
    <reaction evidence="1">
        <text>an N-(acyl)-sphingosylphosphocholine = an N-(acyl)-sphingosyl-1,3-cyclic phosphate + choline</text>
        <dbReference type="Rhea" id="RHEA:60652"/>
        <dbReference type="ChEBI" id="CHEBI:15354"/>
        <dbReference type="ChEBI" id="CHEBI:64583"/>
        <dbReference type="ChEBI" id="CHEBI:143892"/>
    </reaction>
</comment>
<comment type="catalytic activity">
    <reaction evidence="1">
        <text>an N-(acyl)-sphingosylphosphoethanolamine = an N-(acyl)-sphingosyl-1,3-cyclic phosphate + ethanolamine</text>
        <dbReference type="Rhea" id="RHEA:60648"/>
        <dbReference type="ChEBI" id="CHEBI:57603"/>
        <dbReference type="ChEBI" id="CHEBI:143891"/>
        <dbReference type="ChEBI" id="CHEBI:143892"/>
    </reaction>
</comment>
<comment type="catalytic activity">
    <reaction evidence="1">
        <text>a 1-acyl-sn-glycero-3-phosphocholine = a 1-acyl-sn-glycero-2,3-cyclic phosphate + choline</text>
        <dbReference type="Rhea" id="RHEA:60700"/>
        <dbReference type="ChEBI" id="CHEBI:15354"/>
        <dbReference type="ChEBI" id="CHEBI:58168"/>
        <dbReference type="ChEBI" id="CHEBI:143947"/>
    </reaction>
</comment>
<comment type="catalytic activity">
    <reaction evidence="1">
        <text>a 1-acyl-sn-glycero-3-phosphoethanolamine = a 1-acyl-sn-glycero-2,3-cyclic phosphate + ethanolamine</text>
        <dbReference type="Rhea" id="RHEA:60704"/>
        <dbReference type="ChEBI" id="CHEBI:57603"/>
        <dbReference type="ChEBI" id="CHEBI:64381"/>
        <dbReference type="ChEBI" id="CHEBI:143947"/>
    </reaction>
</comment>
<comment type="cofactor">
    <cofactor evidence="5">
        <name>Mg(2+)</name>
        <dbReference type="ChEBI" id="CHEBI:18420"/>
    </cofactor>
    <text evidence="5">Binds 1 Mg(2+) ion per subunit.</text>
</comment>
<comment type="subcellular location">
    <subcellularLocation>
        <location evidence="9">Secreted</location>
    </subcellularLocation>
</comment>
<comment type="tissue specificity">
    <text evidence="9">Expressed by the venom gland.</text>
</comment>
<comment type="similarity">
    <text evidence="8">Belongs to the arthropod phospholipase D family. Class II subfamily.</text>
</comment>
<comment type="caution">
    <text evidence="1 2 4">The most common activity assay for dermonecrotic toxins detects enzymatic activity by monitoring choline release from substrate. Liberation of choline from sphingomyelin (SM) or lysophosphatidylcholine (LPC) is commonly assumed to result from substrate hydrolysis, giving either ceramide-1-phosphate (C1P) or lysophosphatidic acid (LPA), respectively, as a second product. However, two studies from Lajoie and colleagues (2013 and 2015) report the observation of exclusive formation of cyclic phosphate products as second products, resulting from intramolecular transphosphatidylation. Cyclic phosphates have vastly different biological properties from their monoester counterparts, and they may be relevant to the pathology of brown spider envenomation.</text>
</comment>
<protein>
    <recommendedName>
        <fullName evidence="7">Dermonecrotic toxin LapSicTox-alphaIB1bi</fullName>
        <ecNumber evidence="4">4.6.1.-</ecNumber>
    </recommendedName>
    <alternativeName>
        <fullName>Phospholipase D</fullName>
        <shortName>PLD</shortName>
    </alternativeName>
    <alternativeName>
        <fullName>Sphingomyelin phosphodiesterase D</fullName>
        <shortName>SMD</shortName>
        <shortName>SMase D</shortName>
        <shortName>Sphingomyelinase D</shortName>
    </alternativeName>
</protein>
<dbReference type="EC" id="4.6.1.-" evidence="4"/>
<dbReference type="EMBL" id="FJ171393">
    <property type="protein sequence ID" value="ACN48889.1"/>
    <property type="molecule type" value="mRNA"/>
</dbReference>
<dbReference type="SMR" id="C0JAV8"/>
<dbReference type="GO" id="GO:0005576">
    <property type="term" value="C:extracellular region"/>
    <property type="evidence" value="ECO:0007669"/>
    <property type="project" value="UniProtKB-SubCell"/>
</dbReference>
<dbReference type="GO" id="GO:0016829">
    <property type="term" value="F:lyase activity"/>
    <property type="evidence" value="ECO:0007669"/>
    <property type="project" value="UniProtKB-KW"/>
</dbReference>
<dbReference type="GO" id="GO:0046872">
    <property type="term" value="F:metal ion binding"/>
    <property type="evidence" value="ECO:0007669"/>
    <property type="project" value="UniProtKB-KW"/>
</dbReference>
<dbReference type="GO" id="GO:0008081">
    <property type="term" value="F:phosphoric diester hydrolase activity"/>
    <property type="evidence" value="ECO:0007669"/>
    <property type="project" value="InterPro"/>
</dbReference>
<dbReference type="GO" id="GO:0090729">
    <property type="term" value="F:toxin activity"/>
    <property type="evidence" value="ECO:0007669"/>
    <property type="project" value="UniProtKB-KW"/>
</dbReference>
<dbReference type="GO" id="GO:0031640">
    <property type="term" value="P:killing of cells of another organism"/>
    <property type="evidence" value="ECO:0007669"/>
    <property type="project" value="UniProtKB-KW"/>
</dbReference>
<dbReference type="GO" id="GO:0016042">
    <property type="term" value="P:lipid catabolic process"/>
    <property type="evidence" value="ECO:0007669"/>
    <property type="project" value="UniProtKB-KW"/>
</dbReference>
<dbReference type="CDD" id="cd08576">
    <property type="entry name" value="GDPD_like_SMaseD_PLD"/>
    <property type="match status" value="1"/>
</dbReference>
<dbReference type="Gene3D" id="3.20.20.190">
    <property type="entry name" value="Phosphatidylinositol (PI) phosphodiesterase"/>
    <property type="match status" value="1"/>
</dbReference>
<dbReference type="InterPro" id="IPR017946">
    <property type="entry name" value="PLC-like_Pdiesterase_TIM-brl"/>
</dbReference>
<dbReference type="Pfam" id="PF13653">
    <property type="entry name" value="GDPD_2"/>
    <property type="match status" value="1"/>
</dbReference>
<dbReference type="SUPFAM" id="SSF51695">
    <property type="entry name" value="PLC-like phosphodiesterases"/>
    <property type="match status" value="1"/>
</dbReference>
<organism>
    <name type="scientific">Loxosceles apachea</name>
    <name type="common">Apache recluse spider</name>
    <dbReference type="NCBI Taxonomy" id="571518"/>
    <lineage>
        <taxon>Eukaryota</taxon>
        <taxon>Metazoa</taxon>
        <taxon>Ecdysozoa</taxon>
        <taxon>Arthropoda</taxon>
        <taxon>Chelicerata</taxon>
        <taxon>Arachnida</taxon>
        <taxon>Araneae</taxon>
        <taxon>Araneomorphae</taxon>
        <taxon>Haplogynae</taxon>
        <taxon>Scytodoidea</taxon>
        <taxon>Sicariidae</taxon>
        <taxon>Loxosceles</taxon>
    </lineage>
</organism>
<proteinExistence type="evidence at transcript level"/>
<feature type="chain" id="PRO_0000392782" description="Dermonecrotic toxin LapSicTox-alphaIB1bi">
    <location>
        <begin position="1" status="less than"/>
        <end position="273"/>
    </location>
</feature>
<feature type="active site" evidence="5">
    <location>
        <position position="5"/>
    </location>
</feature>
<feature type="active site" description="Nucleophile" evidence="5">
    <location>
        <position position="41"/>
    </location>
</feature>
<feature type="binding site" evidence="5">
    <location>
        <position position="25"/>
    </location>
    <ligand>
        <name>Mg(2+)</name>
        <dbReference type="ChEBI" id="CHEBI:18420"/>
    </ligand>
</feature>
<feature type="binding site" evidence="5">
    <location>
        <position position="27"/>
    </location>
    <ligand>
        <name>Mg(2+)</name>
        <dbReference type="ChEBI" id="CHEBI:18420"/>
    </ligand>
</feature>
<feature type="binding site" evidence="5">
    <location>
        <position position="85"/>
    </location>
    <ligand>
        <name>Mg(2+)</name>
        <dbReference type="ChEBI" id="CHEBI:18420"/>
    </ligand>
</feature>
<feature type="glycosylation site" description="N-linked (GlcNAc...) asparagine" evidence="6">
    <location>
        <position position="189"/>
    </location>
</feature>
<feature type="glycosylation site" description="N-linked (GlcNAc...) asparagine" evidence="6">
    <location>
        <position position="250"/>
    </location>
</feature>
<feature type="disulfide bond" evidence="3">
    <location>
        <begin position="45"/>
        <end position="51"/>
    </location>
</feature>
<feature type="disulfide bond" evidence="3">
    <location>
        <begin position="47"/>
        <end position="190"/>
    </location>
</feature>
<feature type="non-terminal residue">
    <location>
        <position position="1"/>
    </location>
</feature>
<keyword id="KW-0204">Cytolysis</keyword>
<keyword id="KW-1061">Dermonecrotic toxin</keyword>
<keyword id="KW-1015">Disulfide bond</keyword>
<keyword id="KW-0325">Glycoprotein</keyword>
<keyword id="KW-0354">Hemolysis</keyword>
<keyword id="KW-0442">Lipid degradation</keyword>
<keyword id="KW-0443">Lipid metabolism</keyword>
<keyword id="KW-0456">Lyase</keyword>
<keyword id="KW-0460">Magnesium</keyword>
<keyword id="KW-0479">Metal-binding</keyword>
<keyword id="KW-0964">Secreted</keyword>
<keyword id="KW-0800">Toxin</keyword>
<evidence type="ECO:0000250" key="1">
    <source>
        <dbReference type="UniProtKB" id="A0A0D4WTV1"/>
    </source>
</evidence>
<evidence type="ECO:0000250" key="2">
    <source>
        <dbReference type="UniProtKB" id="A0A0D4WV12"/>
    </source>
</evidence>
<evidence type="ECO:0000250" key="3">
    <source>
        <dbReference type="UniProtKB" id="P0CE80"/>
    </source>
</evidence>
<evidence type="ECO:0000250" key="4">
    <source>
        <dbReference type="UniProtKB" id="Q4ZFU2"/>
    </source>
</evidence>
<evidence type="ECO:0000250" key="5">
    <source>
        <dbReference type="UniProtKB" id="Q8I914"/>
    </source>
</evidence>
<evidence type="ECO:0000255" key="6"/>
<evidence type="ECO:0000303" key="7">
    <source>
    </source>
</evidence>
<evidence type="ECO:0000305" key="8"/>
<evidence type="ECO:0000305" key="9">
    <source>
    </source>
</evidence>
<sequence>WIMGHMVNAIAQIDEFVNLGANSIETDVSFDSSANPEYTYHGIPCDCGRTCTKWEHFNEFLKGLRKATTPGDSKYHEKLVLVVFDLKTGSLYDNQASDAGKKLAKSLLQNYWNNGNNGGRAYIVLSIPNLAHYKLITGFKEALTSEGHPELMDKVGYDFSGNDDIGDVANAYKKAGVTGHAWQSDGITNCSLRGLDRVRKAVANRDSSNGYINKVYYWTVDKRQSTRDALDAGVDGIMTNYPDVIADVLNESAYKAKFRIASYDDNPWETFKN</sequence>
<accession>C0JAV8</accession>